<keyword id="KW-0687">Ribonucleoprotein</keyword>
<keyword id="KW-0689">Ribosomal protein</keyword>
<gene>
    <name evidence="1" type="primary">rpmB</name>
    <name type="ordered locus">BT9727_3599</name>
</gene>
<feature type="chain" id="PRO_0000178427" description="Large ribosomal subunit protein bL28">
    <location>
        <begin position="1"/>
        <end position="62"/>
    </location>
</feature>
<feature type="region of interest" description="Disordered" evidence="2">
    <location>
        <begin position="1"/>
        <end position="28"/>
    </location>
</feature>
<name>RL28_BACHK</name>
<accession>Q6HEV7</accession>
<organism>
    <name type="scientific">Bacillus thuringiensis subsp. konkukian (strain 97-27)</name>
    <dbReference type="NCBI Taxonomy" id="281309"/>
    <lineage>
        <taxon>Bacteria</taxon>
        <taxon>Bacillati</taxon>
        <taxon>Bacillota</taxon>
        <taxon>Bacilli</taxon>
        <taxon>Bacillales</taxon>
        <taxon>Bacillaceae</taxon>
        <taxon>Bacillus</taxon>
        <taxon>Bacillus cereus group</taxon>
    </lineage>
</organism>
<evidence type="ECO:0000255" key="1">
    <source>
        <dbReference type="HAMAP-Rule" id="MF_00373"/>
    </source>
</evidence>
<evidence type="ECO:0000256" key="2">
    <source>
        <dbReference type="SAM" id="MobiDB-lite"/>
    </source>
</evidence>
<evidence type="ECO:0000305" key="3"/>
<proteinExistence type="inferred from homology"/>
<reference key="1">
    <citation type="journal article" date="2006" name="J. Bacteriol.">
        <title>Pathogenomic sequence analysis of Bacillus cereus and Bacillus thuringiensis isolates closely related to Bacillus anthracis.</title>
        <authorList>
            <person name="Han C.S."/>
            <person name="Xie G."/>
            <person name="Challacombe J.F."/>
            <person name="Altherr M.R."/>
            <person name="Bhotika S.S."/>
            <person name="Bruce D."/>
            <person name="Campbell C.S."/>
            <person name="Campbell M.L."/>
            <person name="Chen J."/>
            <person name="Chertkov O."/>
            <person name="Cleland C."/>
            <person name="Dimitrijevic M."/>
            <person name="Doggett N.A."/>
            <person name="Fawcett J.J."/>
            <person name="Glavina T."/>
            <person name="Goodwin L.A."/>
            <person name="Hill K.K."/>
            <person name="Hitchcock P."/>
            <person name="Jackson P.J."/>
            <person name="Keim P."/>
            <person name="Kewalramani A.R."/>
            <person name="Longmire J."/>
            <person name="Lucas S."/>
            <person name="Malfatti S."/>
            <person name="McMurry K."/>
            <person name="Meincke L.J."/>
            <person name="Misra M."/>
            <person name="Moseman B.L."/>
            <person name="Mundt M."/>
            <person name="Munk A.C."/>
            <person name="Okinaka R.T."/>
            <person name="Parson-Quintana B."/>
            <person name="Reilly L.P."/>
            <person name="Richardson P."/>
            <person name="Robinson D.L."/>
            <person name="Rubin E."/>
            <person name="Saunders E."/>
            <person name="Tapia R."/>
            <person name="Tesmer J.G."/>
            <person name="Thayer N."/>
            <person name="Thompson L.S."/>
            <person name="Tice H."/>
            <person name="Ticknor L.O."/>
            <person name="Wills P.L."/>
            <person name="Brettin T.S."/>
            <person name="Gilna P."/>
        </authorList>
    </citation>
    <scope>NUCLEOTIDE SEQUENCE [LARGE SCALE GENOMIC DNA]</scope>
    <source>
        <strain>97-27</strain>
    </source>
</reference>
<sequence length="62" mass="6923">MARVCAITGRKARSGNSRSHAMNATKRKWGANLQKVRVRIDGKVQRVYVSARALKSGKIERV</sequence>
<dbReference type="EMBL" id="AE017355">
    <property type="protein sequence ID" value="AAT60621.1"/>
    <property type="molecule type" value="Genomic_DNA"/>
</dbReference>
<dbReference type="RefSeq" id="WP_000124776.1">
    <property type="nucleotide sequence ID" value="NC_005957.1"/>
</dbReference>
<dbReference type="RefSeq" id="YP_037919.1">
    <property type="nucleotide sequence ID" value="NC_005957.1"/>
</dbReference>
<dbReference type="SMR" id="Q6HEV7"/>
<dbReference type="GeneID" id="93007254"/>
<dbReference type="KEGG" id="btk:BT9727_3599"/>
<dbReference type="PATRIC" id="fig|281309.8.peg.3837"/>
<dbReference type="HOGENOM" id="CLU_064548_7_1_9"/>
<dbReference type="PRO" id="PR:Q6HEV7"/>
<dbReference type="Proteomes" id="UP000001301">
    <property type="component" value="Chromosome"/>
</dbReference>
<dbReference type="GO" id="GO:1990904">
    <property type="term" value="C:ribonucleoprotein complex"/>
    <property type="evidence" value="ECO:0007669"/>
    <property type="project" value="UniProtKB-KW"/>
</dbReference>
<dbReference type="GO" id="GO:0005840">
    <property type="term" value="C:ribosome"/>
    <property type="evidence" value="ECO:0007669"/>
    <property type="project" value="UniProtKB-KW"/>
</dbReference>
<dbReference type="GO" id="GO:0003735">
    <property type="term" value="F:structural constituent of ribosome"/>
    <property type="evidence" value="ECO:0007669"/>
    <property type="project" value="InterPro"/>
</dbReference>
<dbReference type="GO" id="GO:0006412">
    <property type="term" value="P:translation"/>
    <property type="evidence" value="ECO:0007669"/>
    <property type="project" value="UniProtKB-UniRule"/>
</dbReference>
<dbReference type="Gene3D" id="2.30.170.40">
    <property type="entry name" value="Ribosomal protein L28/L24"/>
    <property type="match status" value="1"/>
</dbReference>
<dbReference type="HAMAP" id="MF_00373">
    <property type="entry name" value="Ribosomal_bL28"/>
    <property type="match status" value="1"/>
</dbReference>
<dbReference type="InterPro" id="IPR050096">
    <property type="entry name" value="Bacterial_rp_bL28"/>
</dbReference>
<dbReference type="InterPro" id="IPR026569">
    <property type="entry name" value="Ribosomal_bL28"/>
</dbReference>
<dbReference type="InterPro" id="IPR034704">
    <property type="entry name" value="Ribosomal_bL28/bL31-like_sf"/>
</dbReference>
<dbReference type="InterPro" id="IPR001383">
    <property type="entry name" value="Ribosomal_bL28_bact-type"/>
</dbReference>
<dbReference type="InterPro" id="IPR037147">
    <property type="entry name" value="Ribosomal_bL28_sf"/>
</dbReference>
<dbReference type="NCBIfam" id="TIGR00009">
    <property type="entry name" value="L28"/>
    <property type="match status" value="1"/>
</dbReference>
<dbReference type="PANTHER" id="PTHR39080">
    <property type="entry name" value="50S RIBOSOMAL PROTEIN L28"/>
    <property type="match status" value="1"/>
</dbReference>
<dbReference type="PANTHER" id="PTHR39080:SF1">
    <property type="entry name" value="LARGE RIBOSOMAL SUBUNIT PROTEIN BL28A"/>
    <property type="match status" value="1"/>
</dbReference>
<dbReference type="Pfam" id="PF00830">
    <property type="entry name" value="Ribosomal_L28"/>
    <property type="match status" value="1"/>
</dbReference>
<dbReference type="SUPFAM" id="SSF143800">
    <property type="entry name" value="L28p-like"/>
    <property type="match status" value="1"/>
</dbReference>
<protein>
    <recommendedName>
        <fullName evidence="1">Large ribosomal subunit protein bL28</fullName>
    </recommendedName>
    <alternativeName>
        <fullName evidence="3">50S ribosomal protein L28</fullName>
    </alternativeName>
</protein>
<comment type="similarity">
    <text evidence="1">Belongs to the bacterial ribosomal protein bL28 family.</text>
</comment>